<proteinExistence type="inferred from homology"/>
<sequence>MSRRKVCRFTVEGVKEIDYKDVNKLKAYITETGKIVPSRVTGTSAKYQRQLATAIKRARFLALLPYCDRHFN</sequence>
<gene>
    <name evidence="1" type="primary">rpsR</name>
    <name type="ordered locus">FTW_0971</name>
</gene>
<organism>
    <name type="scientific">Francisella tularensis subsp. tularensis (strain WY96-3418)</name>
    <dbReference type="NCBI Taxonomy" id="418136"/>
    <lineage>
        <taxon>Bacteria</taxon>
        <taxon>Pseudomonadati</taxon>
        <taxon>Pseudomonadota</taxon>
        <taxon>Gammaproteobacteria</taxon>
        <taxon>Thiotrichales</taxon>
        <taxon>Francisellaceae</taxon>
        <taxon>Francisella</taxon>
    </lineage>
</organism>
<reference key="1">
    <citation type="journal article" date="2007" name="PLoS ONE">
        <title>Complete genomic characterization of a pathogenic A.II strain of Francisella tularensis subspecies tularensis.</title>
        <authorList>
            <person name="Beckstrom-Sternberg S.M."/>
            <person name="Auerbach R.K."/>
            <person name="Godbole S."/>
            <person name="Pearson J.V."/>
            <person name="Beckstrom-Sternberg J.S."/>
            <person name="Deng Z."/>
            <person name="Munk C."/>
            <person name="Kubota K."/>
            <person name="Zhou Y."/>
            <person name="Bruce D."/>
            <person name="Noronha J."/>
            <person name="Scheuermann R.H."/>
            <person name="Wang A."/>
            <person name="Wei X."/>
            <person name="Wang J."/>
            <person name="Hao J."/>
            <person name="Wagner D.M."/>
            <person name="Brettin T.S."/>
            <person name="Brown N."/>
            <person name="Gilna P."/>
            <person name="Keim P.S."/>
        </authorList>
    </citation>
    <scope>NUCLEOTIDE SEQUENCE [LARGE SCALE GENOMIC DNA]</scope>
    <source>
        <strain>WY96-3418</strain>
    </source>
</reference>
<protein>
    <recommendedName>
        <fullName evidence="1">Small ribosomal subunit protein bS18</fullName>
    </recommendedName>
    <alternativeName>
        <fullName evidence="2">30S ribosomal protein S18</fullName>
    </alternativeName>
</protein>
<name>RS18_FRATW</name>
<evidence type="ECO:0000255" key="1">
    <source>
        <dbReference type="HAMAP-Rule" id="MF_00270"/>
    </source>
</evidence>
<evidence type="ECO:0000305" key="2"/>
<comment type="function">
    <text evidence="1">Binds as a heterodimer with protein bS6 to the central domain of the 16S rRNA, where it helps stabilize the platform of the 30S subunit.</text>
</comment>
<comment type="subunit">
    <text evidence="1">Part of the 30S ribosomal subunit. Forms a tight heterodimer with protein bS6.</text>
</comment>
<comment type="similarity">
    <text evidence="1">Belongs to the bacterial ribosomal protein bS18 family.</text>
</comment>
<feature type="chain" id="PRO_0000345476" description="Small ribosomal subunit protein bS18">
    <location>
        <begin position="1"/>
        <end position="72"/>
    </location>
</feature>
<keyword id="KW-0687">Ribonucleoprotein</keyword>
<keyword id="KW-0689">Ribosomal protein</keyword>
<keyword id="KW-0694">RNA-binding</keyword>
<keyword id="KW-0699">rRNA-binding</keyword>
<accession>A4IY06</accession>
<dbReference type="EMBL" id="CP000608">
    <property type="protein sequence ID" value="ABO46807.1"/>
    <property type="molecule type" value="Genomic_DNA"/>
</dbReference>
<dbReference type="RefSeq" id="WP_003021184.1">
    <property type="nucleotide sequence ID" value="NC_009257.1"/>
</dbReference>
<dbReference type="SMR" id="A4IY06"/>
<dbReference type="GeneID" id="75265314"/>
<dbReference type="KEGG" id="ftw:FTW_0971"/>
<dbReference type="HOGENOM" id="CLU_148710_2_3_6"/>
<dbReference type="GO" id="GO:0022627">
    <property type="term" value="C:cytosolic small ribosomal subunit"/>
    <property type="evidence" value="ECO:0007669"/>
    <property type="project" value="TreeGrafter"/>
</dbReference>
<dbReference type="GO" id="GO:0070181">
    <property type="term" value="F:small ribosomal subunit rRNA binding"/>
    <property type="evidence" value="ECO:0007669"/>
    <property type="project" value="TreeGrafter"/>
</dbReference>
<dbReference type="GO" id="GO:0003735">
    <property type="term" value="F:structural constituent of ribosome"/>
    <property type="evidence" value="ECO:0007669"/>
    <property type="project" value="InterPro"/>
</dbReference>
<dbReference type="GO" id="GO:0006412">
    <property type="term" value="P:translation"/>
    <property type="evidence" value="ECO:0007669"/>
    <property type="project" value="UniProtKB-UniRule"/>
</dbReference>
<dbReference type="Gene3D" id="4.10.640.10">
    <property type="entry name" value="Ribosomal protein S18"/>
    <property type="match status" value="1"/>
</dbReference>
<dbReference type="HAMAP" id="MF_00270">
    <property type="entry name" value="Ribosomal_bS18"/>
    <property type="match status" value="1"/>
</dbReference>
<dbReference type="InterPro" id="IPR001648">
    <property type="entry name" value="Ribosomal_bS18"/>
</dbReference>
<dbReference type="InterPro" id="IPR018275">
    <property type="entry name" value="Ribosomal_bS18_CS"/>
</dbReference>
<dbReference type="InterPro" id="IPR036870">
    <property type="entry name" value="Ribosomal_bS18_sf"/>
</dbReference>
<dbReference type="NCBIfam" id="TIGR00165">
    <property type="entry name" value="S18"/>
    <property type="match status" value="1"/>
</dbReference>
<dbReference type="PANTHER" id="PTHR13479">
    <property type="entry name" value="30S RIBOSOMAL PROTEIN S18"/>
    <property type="match status" value="1"/>
</dbReference>
<dbReference type="PANTHER" id="PTHR13479:SF40">
    <property type="entry name" value="SMALL RIBOSOMAL SUBUNIT PROTEIN BS18M"/>
    <property type="match status" value="1"/>
</dbReference>
<dbReference type="Pfam" id="PF01084">
    <property type="entry name" value="Ribosomal_S18"/>
    <property type="match status" value="1"/>
</dbReference>
<dbReference type="PRINTS" id="PR00974">
    <property type="entry name" value="RIBOSOMALS18"/>
</dbReference>
<dbReference type="SUPFAM" id="SSF46911">
    <property type="entry name" value="Ribosomal protein S18"/>
    <property type="match status" value="1"/>
</dbReference>
<dbReference type="PROSITE" id="PS00057">
    <property type="entry name" value="RIBOSOMAL_S18"/>
    <property type="match status" value="1"/>
</dbReference>